<comment type="function">
    <text evidence="1">Allows the formation of correctly charged Asn-tRNA(Asn) or Gln-tRNA(Gln) through the transamidation of misacylated Asp-tRNA(Asn) or Glu-tRNA(Gln) in organisms which lack either or both of asparaginyl-tRNA or glutaminyl-tRNA synthetases. The reaction takes place in the presence of glutamine and ATP through an activated phospho-Asp-tRNA(Asn) or phospho-Glu-tRNA(Gln).</text>
</comment>
<comment type="catalytic activity">
    <reaction evidence="1">
        <text>L-glutamyl-tRNA(Gln) + L-glutamine + ATP + H2O = L-glutaminyl-tRNA(Gln) + L-glutamate + ADP + phosphate + H(+)</text>
        <dbReference type="Rhea" id="RHEA:17521"/>
        <dbReference type="Rhea" id="RHEA-COMP:9681"/>
        <dbReference type="Rhea" id="RHEA-COMP:9684"/>
        <dbReference type="ChEBI" id="CHEBI:15377"/>
        <dbReference type="ChEBI" id="CHEBI:15378"/>
        <dbReference type="ChEBI" id="CHEBI:29985"/>
        <dbReference type="ChEBI" id="CHEBI:30616"/>
        <dbReference type="ChEBI" id="CHEBI:43474"/>
        <dbReference type="ChEBI" id="CHEBI:58359"/>
        <dbReference type="ChEBI" id="CHEBI:78520"/>
        <dbReference type="ChEBI" id="CHEBI:78521"/>
        <dbReference type="ChEBI" id="CHEBI:456216"/>
    </reaction>
</comment>
<comment type="catalytic activity">
    <reaction evidence="1">
        <text>L-aspartyl-tRNA(Asn) + L-glutamine + ATP + H2O = L-asparaginyl-tRNA(Asn) + L-glutamate + ADP + phosphate + 2 H(+)</text>
        <dbReference type="Rhea" id="RHEA:14513"/>
        <dbReference type="Rhea" id="RHEA-COMP:9674"/>
        <dbReference type="Rhea" id="RHEA-COMP:9677"/>
        <dbReference type="ChEBI" id="CHEBI:15377"/>
        <dbReference type="ChEBI" id="CHEBI:15378"/>
        <dbReference type="ChEBI" id="CHEBI:29985"/>
        <dbReference type="ChEBI" id="CHEBI:30616"/>
        <dbReference type="ChEBI" id="CHEBI:43474"/>
        <dbReference type="ChEBI" id="CHEBI:58359"/>
        <dbReference type="ChEBI" id="CHEBI:78515"/>
        <dbReference type="ChEBI" id="CHEBI:78516"/>
        <dbReference type="ChEBI" id="CHEBI:456216"/>
    </reaction>
</comment>
<comment type="subunit">
    <text evidence="1">Heterotrimer of A, B and C subunits.</text>
</comment>
<comment type="similarity">
    <text evidence="1">Belongs to the GatC family.</text>
</comment>
<proteinExistence type="inferred from homology"/>
<dbReference type="EC" id="6.3.5.-" evidence="1"/>
<dbReference type="EMBL" id="CP000390">
    <property type="protein sequence ID" value="ABG62759.1"/>
    <property type="molecule type" value="Genomic_DNA"/>
</dbReference>
<dbReference type="SMR" id="Q11IL6"/>
<dbReference type="STRING" id="266779.Meso_1363"/>
<dbReference type="KEGG" id="mes:Meso_1363"/>
<dbReference type="eggNOG" id="COG0721">
    <property type="taxonomic scope" value="Bacteria"/>
</dbReference>
<dbReference type="HOGENOM" id="CLU_105899_2_0_5"/>
<dbReference type="OrthoDB" id="9794326at2"/>
<dbReference type="GO" id="GO:0050566">
    <property type="term" value="F:asparaginyl-tRNA synthase (glutamine-hydrolyzing) activity"/>
    <property type="evidence" value="ECO:0007669"/>
    <property type="project" value="RHEA"/>
</dbReference>
<dbReference type="GO" id="GO:0005524">
    <property type="term" value="F:ATP binding"/>
    <property type="evidence" value="ECO:0007669"/>
    <property type="project" value="UniProtKB-KW"/>
</dbReference>
<dbReference type="GO" id="GO:0050567">
    <property type="term" value="F:glutaminyl-tRNA synthase (glutamine-hydrolyzing) activity"/>
    <property type="evidence" value="ECO:0007669"/>
    <property type="project" value="UniProtKB-UniRule"/>
</dbReference>
<dbReference type="GO" id="GO:0070681">
    <property type="term" value="P:glutaminyl-tRNAGln biosynthesis via transamidation"/>
    <property type="evidence" value="ECO:0007669"/>
    <property type="project" value="TreeGrafter"/>
</dbReference>
<dbReference type="GO" id="GO:0006450">
    <property type="term" value="P:regulation of translational fidelity"/>
    <property type="evidence" value="ECO:0007669"/>
    <property type="project" value="InterPro"/>
</dbReference>
<dbReference type="GO" id="GO:0006412">
    <property type="term" value="P:translation"/>
    <property type="evidence" value="ECO:0007669"/>
    <property type="project" value="UniProtKB-UniRule"/>
</dbReference>
<dbReference type="Gene3D" id="1.10.20.60">
    <property type="entry name" value="Glu-tRNAGln amidotransferase C subunit, N-terminal domain"/>
    <property type="match status" value="1"/>
</dbReference>
<dbReference type="HAMAP" id="MF_00122">
    <property type="entry name" value="GatC"/>
    <property type="match status" value="1"/>
</dbReference>
<dbReference type="InterPro" id="IPR036113">
    <property type="entry name" value="Asp/Glu-ADT_sf_sub_c"/>
</dbReference>
<dbReference type="InterPro" id="IPR003837">
    <property type="entry name" value="GatC"/>
</dbReference>
<dbReference type="NCBIfam" id="TIGR00135">
    <property type="entry name" value="gatC"/>
    <property type="match status" value="1"/>
</dbReference>
<dbReference type="PANTHER" id="PTHR15004">
    <property type="entry name" value="GLUTAMYL-TRNA(GLN) AMIDOTRANSFERASE SUBUNIT C, MITOCHONDRIAL"/>
    <property type="match status" value="1"/>
</dbReference>
<dbReference type="PANTHER" id="PTHR15004:SF0">
    <property type="entry name" value="GLUTAMYL-TRNA(GLN) AMIDOTRANSFERASE SUBUNIT C, MITOCHONDRIAL"/>
    <property type="match status" value="1"/>
</dbReference>
<dbReference type="Pfam" id="PF02686">
    <property type="entry name" value="GatC"/>
    <property type="match status" value="1"/>
</dbReference>
<dbReference type="SUPFAM" id="SSF141000">
    <property type="entry name" value="Glu-tRNAGln amidotransferase C subunit"/>
    <property type="match status" value="1"/>
</dbReference>
<sequence length="95" mass="10447">MSVDIDTVKRVARLARIAVDEEDASRMTGELNAILGFVEQLNEVDVTGVEPMTSVIPTTMKMRVDEVTDGSKAEDIVANAPQTEEHFFLVPKVVE</sequence>
<protein>
    <recommendedName>
        <fullName evidence="1">Aspartyl/glutamyl-tRNA(Asn/Gln) amidotransferase subunit C</fullName>
        <shortName evidence="1">Asp/Glu-ADT subunit C</shortName>
        <ecNumber evidence="1">6.3.5.-</ecNumber>
    </recommendedName>
</protein>
<feature type="chain" id="PRO_1000016144" description="Aspartyl/glutamyl-tRNA(Asn/Gln) amidotransferase subunit C">
    <location>
        <begin position="1"/>
        <end position="95"/>
    </location>
</feature>
<keyword id="KW-0067">ATP-binding</keyword>
<keyword id="KW-0436">Ligase</keyword>
<keyword id="KW-0547">Nucleotide-binding</keyword>
<keyword id="KW-0648">Protein biosynthesis</keyword>
<accession>Q11IL6</accession>
<name>GATC_CHESB</name>
<organism>
    <name type="scientific">Chelativorans sp. (strain BNC1)</name>
    <dbReference type="NCBI Taxonomy" id="266779"/>
    <lineage>
        <taxon>Bacteria</taxon>
        <taxon>Pseudomonadati</taxon>
        <taxon>Pseudomonadota</taxon>
        <taxon>Alphaproteobacteria</taxon>
        <taxon>Hyphomicrobiales</taxon>
        <taxon>Phyllobacteriaceae</taxon>
        <taxon>Chelativorans</taxon>
    </lineage>
</organism>
<gene>
    <name evidence="1" type="primary">gatC</name>
    <name type="ordered locus">Meso_1363</name>
</gene>
<evidence type="ECO:0000255" key="1">
    <source>
        <dbReference type="HAMAP-Rule" id="MF_00122"/>
    </source>
</evidence>
<reference key="1">
    <citation type="submission" date="2006-06" db="EMBL/GenBank/DDBJ databases">
        <title>Complete sequence of chromosome of Mesorhizobium sp. BNC1.</title>
        <authorList>
            <consortium name="US DOE Joint Genome Institute"/>
            <person name="Copeland A."/>
            <person name="Lucas S."/>
            <person name="Lapidus A."/>
            <person name="Barry K."/>
            <person name="Detter J.C."/>
            <person name="Glavina del Rio T."/>
            <person name="Hammon N."/>
            <person name="Israni S."/>
            <person name="Dalin E."/>
            <person name="Tice H."/>
            <person name="Pitluck S."/>
            <person name="Chertkov O."/>
            <person name="Brettin T."/>
            <person name="Bruce D."/>
            <person name="Han C."/>
            <person name="Tapia R."/>
            <person name="Gilna P."/>
            <person name="Schmutz J."/>
            <person name="Larimer F."/>
            <person name="Land M."/>
            <person name="Hauser L."/>
            <person name="Kyrpides N."/>
            <person name="Mikhailova N."/>
            <person name="Richardson P."/>
        </authorList>
    </citation>
    <scope>NUCLEOTIDE SEQUENCE [LARGE SCALE GENOMIC DNA]</scope>
    <source>
        <strain>BNC1</strain>
    </source>
</reference>